<organism>
    <name type="scientific">Aspergillus versicolor</name>
    <dbReference type="NCBI Taxonomy" id="46472"/>
    <lineage>
        <taxon>Eukaryota</taxon>
        <taxon>Fungi</taxon>
        <taxon>Dikarya</taxon>
        <taxon>Ascomycota</taxon>
        <taxon>Pezizomycotina</taxon>
        <taxon>Eurotiomycetes</taxon>
        <taxon>Eurotiomycetidae</taxon>
        <taxon>Eurotiales</taxon>
        <taxon>Aspergillaceae</taxon>
        <taxon>Aspergillus</taxon>
        <taxon>Aspergillus subgen. Nidulantes</taxon>
    </lineage>
</organism>
<protein>
    <recommendedName>
        <fullName evidence="2">Ava biosynthesis cluster protein O</fullName>
    </recommendedName>
</protein>
<accession>P9WEL6</accession>
<name>AVAO_ASPVE</name>
<reference key="1">
    <citation type="journal article" date="2023" name="Nat. Chem. Biol.">
        <title>Genome mining for unknown-unknown natural products.</title>
        <authorList>
            <person name="Yee D.A."/>
            <person name="Niwa K."/>
            <person name="Perlatti B."/>
            <person name="Chen M."/>
            <person name="Li Y."/>
            <person name="Tang Y."/>
        </authorList>
    </citation>
    <scope>NUCLEOTIDE SEQUENCE [GENOMIC DNA]</scope>
    <scope>FUNCTION</scope>
    <source>
        <strain>dI-29</strain>
    </source>
</reference>
<comment type="function">
    <text evidence="1">Part of the cluster that mediates the biosynthesis of a highly modified cyclo-arginine-tryptophan dipeptide (cRW) (PubMed:36702957). The first step of the pathway is perfornmed by the arginine-containing cyclodipeptide synthase (RCPDS) avaA that acts as the scaffold-generating enzyme and is responsible for formation of the cyclo-Arg-Trp (cRW) diketopiperazine. AvaB then acts as a multifunctional flavoenzyme that is responsible for generating the cyclo-Arg-formylkynurenine DKP, which can be deformylated by avaC. AvaB then further catalyzes an additional N-oxidation followed by cyclization and dehydration. The next step is an N-acetylation of the guanidine group catalyzed by the arginine N-acetyltransferase avaD. The roles of the additional enzymes identified within the ava cluster still have to be determined (PubMed:36702957).</text>
</comment>
<comment type="pathway">
    <text evidence="3">Secondary metabolite biosynthesis.</text>
</comment>
<sequence>MSTTTTESANPSLAAQEKIEVDFTPKEHYGDWRDEFHREGCIIIRNAVSPERAQYYVDKQIEWLKNFELGFDEKDESTWTAEHLPVSFRGGKYYYGVAHEKSVWEARTEPGVMDAFAKLWETDELLCSFDGIKIDLPRRKDVKWTPWPHCDHNPDVKGLSCVQGMLNFAPNGPNDGGLIWMKGSAKVFNEFFAEQRKNEDAENFDHKHQEFFKFHEDHMKWFEDRGYAFTKLELGPGDLVLWDSRTVHHSCFAAGDQIRHAQYICMMPKRFATEKALETKKYCFEHYLPNTHLPHRWVTQIVHHCEES</sequence>
<evidence type="ECO:0000269" key="1">
    <source>
    </source>
</evidence>
<evidence type="ECO:0000303" key="2">
    <source>
    </source>
</evidence>
<evidence type="ECO:0000305" key="3">
    <source>
    </source>
</evidence>
<gene>
    <name evidence="2" type="primary">avaO</name>
</gene>
<proteinExistence type="predicted"/>
<dbReference type="EMBL" id="OP596311">
    <property type="protein sequence ID" value="UZP48227.1"/>
    <property type="molecule type" value="Genomic_DNA"/>
</dbReference>
<dbReference type="SMR" id="P9WEL6"/>
<dbReference type="Gene3D" id="2.60.120.620">
    <property type="entry name" value="q2cbj1_9rhob like domain"/>
    <property type="match status" value="1"/>
</dbReference>
<dbReference type="InterPro" id="IPR008775">
    <property type="entry name" value="Phytyl_CoA_dOase-like"/>
</dbReference>
<dbReference type="PANTHER" id="PTHR31630:SF6">
    <property type="entry name" value="PHYTANOYL-COA DIOXYGENASE-RELATED"/>
    <property type="match status" value="1"/>
</dbReference>
<dbReference type="PANTHER" id="PTHR31630">
    <property type="entry name" value="PHYTANOYL-COA DIOXYGENASE-RELATED-RELATED"/>
    <property type="match status" value="1"/>
</dbReference>
<dbReference type="Pfam" id="PF05721">
    <property type="entry name" value="PhyH"/>
    <property type="match status" value="1"/>
</dbReference>
<dbReference type="SUPFAM" id="SSF51197">
    <property type="entry name" value="Clavaminate synthase-like"/>
    <property type="match status" value="1"/>
</dbReference>
<feature type="chain" id="PRO_0000461009" description="Ava biosynthesis cluster protein O">
    <location>
        <begin position="1"/>
        <end position="308"/>
    </location>
</feature>